<feature type="chain" id="PRO_0000115252" description="Uncharacterized protein IRL4">
    <location>
        <begin position="1"/>
        <end position="170"/>
    </location>
</feature>
<sequence>MQHARVYVCIASPPSRLPSAVPLPPPPAPPPLPSPPRYPFLVGWSWGTGRRPVGFCFIIFFYFLSSPFLNLGLSFPSPTYHESQMINKRVKRKKLQTFGYLSFPITRRIQSRRFPTRENRTKTRSFLFILIVNNNYRQQRNTTKNVNPQGCSCPLDAPVAILMARTAISV</sequence>
<proteinExistence type="predicted"/>
<name>IR04_HCMVA</name>
<reference key="1">
    <citation type="journal article" date="1987" name="Virus Res.">
        <title>Nucleotide sequence of the most abundantly transcribed early gene of human cytomegalovirus strain AD169.</title>
        <authorList>
            <person name="Greenaway P.J."/>
            <person name="Wilkinson G.W.G."/>
        </authorList>
    </citation>
    <scope>NUCLEOTIDE SEQUENCE [GENOMIC DNA]</scope>
</reference>
<reference key="2">
    <citation type="journal article" date="1990" name="Curr. Top. Microbiol. Immunol.">
        <title>Analysis of the protein-coding content of the sequence of human cytomegalovirus strain AD169.</title>
        <authorList>
            <person name="Chee M.S."/>
            <person name="Bankier A.T."/>
            <person name="Beck S."/>
            <person name="Bohni R."/>
            <person name="Brown C.M."/>
            <person name="Cerny R."/>
            <person name="Horsnell T."/>
            <person name="Hutchison C.A. III"/>
            <person name="Kouzarides T."/>
            <person name="Martignetti J.A."/>
            <person name="Preddie E."/>
            <person name="Satchwell S.C."/>
            <person name="Tomlinson P."/>
            <person name="Weston K.M."/>
            <person name="Barrell B.G."/>
        </authorList>
    </citation>
    <scope>NUCLEOTIDE SEQUENCE [LARGE SCALE GENOMIC DNA]</scope>
</reference>
<organismHost>
    <name type="scientific">Homo sapiens</name>
    <name type="common">Human</name>
    <dbReference type="NCBI Taxonomy" id="9606"/>
</organismHost>
<dbReference type="EMBL" id="X17403">
    <property type="protein sequence ID" value="CAA35453.1"/>
    <property type="molecule type" value="Genomic_DNA"/>
</dbReference>
<dbReference type="EMBL" id="X17403">
    <property type="protein sequence ID" value="CAA35305.1"/>
    <property type="molecule type" value="Genomic_DNA"/>
</dbReference>
<dbReference type="EMBL" id="M17956">
    <property type="protein sequence ID" value="AAA45919.1"/>
    <property type="molecule type" value="Genomic_DNA"/>
</dbReference>
<dbReference type="PIR" id="S09754">
    <property type="entry name" value="S09754"/>
</dbReference>
<dbReference type="Proteomes" id="UP000008991">
    <property type="component" value="Segment"/>
</dbReference>
<protein>
    <recommendedName>
        <fullName>Uncharacterized protein IRL4</fullName>
        <shortName>TRL4</shortName>
    </recommendedName>
</protein>
<accession>P09694</accession>
<organism>
    <name type="scientific">Human cytomegalovirus (strain AD169)</name>
    <name type="common">HHV-5</name>
    <name type="synonym">Human herpesvirus 5</name>
    <dbReference type="NCBI Taxonomy" id="10360"/>
    <lineage>
        <taxon>Viruses</taxon>
        <taxon>Duplodnaviria</taxon>
        <taxon>Heunggongvirae</taxon>
        <taxon>Peploviricota</taxon>
        <taxon>Herviviricetes</taxon>
        <taxon>Herpesvirales</taxon>
        <taxon>Orthoherpesviridae</taxon>
        <taxon>Betaherpesvirinae</taxon>
        <taxon>Cytomegalovirus</taxon>
        <taxon>Cytomegalovirus humanbeta5</taxon>
        <taxon>Human cytomegalovirus</taxon>
    </lineage>
</organism>